<accession>P9WP54</accession>
<accession>L0TC08</accession>
<accession>P0A534</accession>
<accession>P95230</accession>
<proteinExistence type="inferred from homology"/>
<evidence type="ECO:0000250" key="1"/>
<evidence type="ECO:0000305" key="2"/>
<keyword id="KW-0028">Amino-acid biosynthesis</keyword>
<keyword id="KW-0198">Cysteine biosynthesis</keyword>
<keyword id="KW-0663">Pyridoxal phosphate</keyword>
<keyword id="KW-1185">Reference proteome</keyword>
<keyword id="KW-0808">Transferase</keyword>
<name>CYSK_MYCTO</name>
<dbReference type="EC" id="2.5.1.47"/>
<dbReference type="EMBL" id="AE000516">
    <property type="protein sequence ID" value="AAK46689.1"/>
    <property type="molecule type" value="Genomic_DNA"/>
</dbReference>
<dbReference type="PIR" id="G70660">
    <property type="entry name" value="G70660"/>
</dbReference>
<dbReference type="RefSeq" id="WP_003899275.1">
    <property type="nucleotide sequence ID" value="NZ_KK341227.1"/>
</dbReference>
<dbReference type="SMR" id="P9WP54"/>
<dbReference type="GeneID" id="45426318"/>
<dbReference type="KEGG" id="mtc:MT2397"/>
<dbReference type="PATRIC" id="fig|83331.31.peg.2585"/>
<dbReference type="HOGENOM" id="CLU_021018_1_0_11"/>
<dbReference type="UniPathway" id="UPA00136">
    <property type="reaction ID" value="UER00200"/>
</dbReference>
<dbReference type="Proteomes" id="UP000001020">
    <property type="component" value="Chromosome"/>
</dbReference>
<dbReference type="GO" id="GO:0004124">
    <property type="term" value="F:cysteine synthase activity"/>
    <property type="evidence" value="ECO:0007669"/>
    <property type="project" value="UniProtKB-EC"/>
</dbReference>
<dbReference type="GO" id="GO:0006535">
    <property type="term" value="P:cysteine biosynthetic process from serine"/>
    <property type="evidence" value="ECO:0007669"/>
    <property type="project" value="InterPro"/>
</dbReference>
<dbReference type="CDD" id="cd01561">
    <property type="entry name" value="CBS_like"/>
    <property type="match status" value="1"/>
</dbReference>
<dbReference type="FunFam" id="3.40.50.1100:FF:000067">
    <property type="entry name" value="Cysteine synthase"/>
    <property type="match status" value="1"/>
</dbReference>
<dbReference type="Gene3D" id="3.40.50.1100">
    <property type="match status" value="2"/>
</dbReference>
<dbReference type="InterPro" id="IPR005856">
    <property type="entry name" value="Cys_synth"/>
</dbReference>
<dbReference type="InterPro" id="IPR050214">
    <property type="entry name" value="Cys_Synth/Cystath_Beta-Synth"/>
</dbReference>
<dbReference type="InterPro" id="IPR005859">
    <property type="entry name" value="CysK"/>
</dbReference>
<dbReference type="InterPro" id="IPR001216">
    <property type="entry name" value="P-phosphate_BS"/>
</dbReference>
<dbReference type="InterPro" id="IPR001926">
    <property type="entry name" value="TrpB-like_PALP"/>
</dbReference>
<dbReference type="InterPro" id="IPR036052">
    <property type="entry name" value="TrpB-like_PALP_sf"/>
</dbReference>
<dbReference type="NCBIfam" id="TIGR01139">
    <property type="entry name" value="cysK"/>
    <property type="match status" value="1"/>
</dbReference>
<dbReference type="NCBIfam" id="TIGR01136">
    <property type="entry name" value="cysKM"/>
    <property type="match status" value="1"/>
</dbReference>
<dbReference type="PANTHER" id="PTHR10314">
    <property type="entry name" value="CYSTATHIONINE BETA-SYNTHASE"/>
    <property type="match status" value="1"/>
</dbReference>
<dbReference type="Pfam" id="PF00291">
    <property type="entry name" value="PALP"/>
    <property type="match status" value="1"/>
</dbReference>
<dbReference type="SUPFAM" id="SSF53686">
    <property type="entry name" value="Tryptophan synthase beta subunit-like PLP-dependent enzymes"/>
    <property type="match status" value="1"/>
</dbReference>
<dbReference type="PROSITE" id="PS00901">
    <property type="entry name" value="CYS_SYNTHASE"/>
    <property type="match status" value="1"/>
</dbReference>
<feature type="chain" id="PRO_0000427011" description="O-acetylserine sulfhydrylase">
    <location>
        <begin position="1"/>
        <end position="310"/>
    </location>
</feature>
<feature type="binding site" evidence="1">
    <location>
        <position position="74"/>
    </location>
    <ligand>
        <name>pyridoxal 5'-phosphate</name>
        <dbReference type="ChEBI" id="CHEBI:597326"/>
    </ligand>
</feature>
<feature type="binding site" evidence="1">
    <location>
        <begin position="178"/>
        <end position="182"/>
    </location>
    <ligand>
        <name>pyridoxal 5'-phosphate</name>
        <dbReference type="ChEBI" id="CHEBI:597326"/>
    </ligand>
</feature>
<feature type="binding site" evidence="1">
    <location>
        <position position="266"/>
    </location>
    <ligand>
        <name>pyridoxal 5'-phosphate</name>
        <dbReference type="ChEBI" id="CHEBI:597326"/>
    </ligand>
</feature>
<feature type="modified residue" description="N6-(pyridoxal phosphate)lysine" evidence="1">
    <location>
        <position position="44"/>
    </location>
</feature>
<sequence length="310" mass="32753">MSIAEDITQLIGRTPLVRLRRVTDGAVADIVAKLEFFNPANSVKDRIGVAMLQAAEQAGLIKPDTIILEPTSGNTGIALAMVCAARGYRCVLTMPETMSLERRMLLRAYGAELILTPGADGMSGAIAKAEELAKTDQRYFVPQQFENPANPAIHRVTTAEEVWRDTDGKVDIVVAGVGTGGTITGVAQVIKERKPSARFVAVEPAASPVLSGGQKGPHPIQGIGAGFVPPVLDQDLVDEIITVGNEDALNVARRLAREEGLLVGISSGAATVAALQVARRPENAGKLIVVVLPDFGERYLSTPLFADVAD</sequence>
<comment type="function">
    <text evidence="1">Catalyzes the conversion of O-acetylserine (OAS) to cysteine through the elimination of acetate and addition of hydrogen sulfide.</text>
</comment>
<comment type="catalytic activity">
    <reaction>
        <text>O-acetyl-L-serine + hydrogen sulfide = L-cysteine + acetate</text>
        <dbReference type="Rhea" id="RHEA:14829"/>
        <dbReference type="ChEBI" id="CHEBI:29919"/>
        <dbReference type="ChEBI" id="CHEBI:30089"/>
        <dbReference type="ChEBI" id="CHEBI:35235"/>
        <dbReference type="ChEBI" id="CHEBI:58340"/>
        <dbReference type="EC" id="2.5.1.47"/>
    </reaction>
</comment>
<comment type="cofactor">
    <cofactor evidence="1">
        <name>pyridoxal 5'-phosphate</name>
        <dbReference type="ChEBI" id="CHEBI:597326"/>
    </cofactor>
</comment>
<comment type="pathway">
    <text>Amino-acid biosynthesis; L-cysteine biosynthesis; L-cysteine from L-serine: step 2/2.</text>
</comment>
<comment type="subunit">
    <text evidence="1">Homodimer.</text>
</comment>
<comment type="similarity">
    <text evidence="2">Belongs to the cysteine synthase/cystathionine beta-synthase family.</text>
</comment>
<organism>
    <name type="scientific">Mycobacterium tuberculosis (strain CDC 1551 / Oshkosh)</name>
    <dbReference type="NCBI Taxonomy" id="83331"/>
    <lineage>
        <taxon>Bacteria</taxon>
        <taxon>Bacillati</taxon>
        <taxon>Actinomycetota</taxon>
        <taxon>Actinomycetes</taxon>
        <taxon>Mycobacteriales</taxon>
        <taxon>Mycobacteriaceae</taxon>
        <taxon>Mycobacterium</taxon>
        <taxon>Mycobacterium tuberculosis complex</taxon>
    </lineage>
</organism>
<gene>
    <name type="primary">cysK1</name>
    <name type="synonym">cysK</name>
    <name type="ordered locus">MT2397</name>
</gene>
<protein>
    <recommendedName>
        <fullName>O-acetylserine sulfhydrylase</fullName>
        <shortName>OAS sulfhydrylase</shortName>
        <shortName>OASS</shortName>
        <ecNumber>2.5.1.47</ecNumber>
    </recommendedName>
    <alternativeName>
        <fullName>Cysteine synthase A</fullName>
        <shortName>CSase A</shortName>
    </alternativeName>
    <alternativeName>
        <fullName>O-acetylserine (thiol)-lyase A</fullName>
        <shortName>OAS-TL A</shortName>
    </alternativeName>
    <alternativeName>
        <fullName>O-acetylserine-specific cysteine synthase</fullName>
    </alternativeName>
    <alternativeName>
        <fullName>Sulfide-dependent cysteine synthase</fullName>
    </alternativeName>
</protein>
<reference key="1">
    <citation type="journal article" date="2002" name="J. Bacteriol.">
        <title>Whole-genome comparison of Mycobacterium tuberculosis clinical and laboratory strains.</title>
        <authorList>
            <person name="Fleischmann R.D."/>
            <person name="Alland D."/>
            <person name="Eisen J.A."/>
            <person name="Carpenter L."/>
            <person name="White O."/>
            <person name="Peterson J.D."/>
            <person name="DeBoy R.T."/>
            <person name="Dodson R.J."/>
            <person name="Gwinn M.L."/>
            <person name="Haft D.H."/>
            <person name="Hickey E.K."/>
            <person name="Kolonay J.F."/>
            <person name="Nelson W.C."/>
            <person name="Umayam L.A."/>
            <person name="Ermolaeva M.D."/>
            <person name="Salzberg S.L."/>
            <person name="Delcher A."/>
            <person name="Utterback T.R."/>
            <person name="Weidman J.F."/>
            <person name="Khouri H.M."/>
            <person name="Gill J."/>
            <person name="Mikula A."/>
            <person name="Bishai W."/>
            <person name="Jacobs W.R. Jr."/>
            <person name="Venter J.C."/>
            <person name="Fraser C.M."/>
        </authorList>
    </citation>
    <scope>NUCLEOTIDE SEQUENCE [LARGE SCALE GENOMIC DNA]</scope>
    <source>
        <strain>CDC 1551 / Oshkosh</strain>
    </source>
</reference>